<protein>
    <recommendedName>
        <fullName evidence="4">Delta-actitoxin-Afv1b</fullName>
        <shortName evidence="4">Delta-AITX-Afv1b</shortName>
    </recommendedName>
    <alternativeName>
        <fullName evidence="3 5">AFT-II</fullName>
        <shortName>AFII</shortName>
    </alternativeName>
</protein>
<keyword id="KW-0123">Cardiotoxin</keyword>
<keyword id="KW-0903">Direct protein sequencing</keyword>
<keyword id="KW-1015">Disulfide bond</keyword>
<keyword id="KW-0872">Ion channel impairing toxin</keyword>
<keyword id="KW-0166">Nematocyst</keyword>
<keyword id="KW-0528">Neurotoxin</keyword>
<keyword id="KW-0964">Secreted</keyword>
<keyword id="KW-0800">Toxin</keyword>
<keyword id="KW-0738">Voltage-gated sodium channel impairing toxin</keyword>
<sequence length="48" mass="4941">GGVPCLCDSDGPSVRGNTLSGIIWLAGCPSGWHNCKAHGPTIGWCCKQ</sequence>
<feature type="chain" id="PRO_0000221519" description="Delta-actitoxin-Afv1b" evidence="2">
    <location>
        <begin position="1"/>
        <end position="48"/>
    </location>
</feature>
<feature type="disulfide bond" evidence="2">
    <location>
        <begin position="5"/>
        <end position="45"/>
    </location>
</feature>
<feature type="disulfide bond" evidence="2">
    <location>
        <begin position="7"/>
        <end position="35"/>
    </location>
</feature>
<feature type="disulfide bond" evidence="2">
    <location>
        <begin position="28"/>
        <end position="46"/>
    </location>
</feature>
<dbReference type="PIR" id="B25860">
    <property type="entry name" value="B25860"/>
</dbReference>
<dbReference type="SMR" id="P10454"/>
<dbReference type="GO" id="GO:0005576">
    <property type="term" value="C:extracellular region"/>
    <property type="evidence" value="ECO:0007669"/>
    <property type="project" value="UniProtKB-SubCell"/>
</dbReference>
<dbReference type="GO" id="GO:0042151">
    <property type="term" value="C:nematocyst"/>
    <property type="evidence" value="ECO:0007669"/>
    <property type="project" value="UniProtKB-SubCell"/>
</dbReference>
<dbReference type="GO" id="GO:0017080">
    <property type="term" value="F:sodium channel regulator activity"/>
    <property type="evidence" value="ECO:0007669"/>
    <property type="project" value="UniProtKB-KW"/>
</dbReference>
<dbReference type="GO" id="GO:0090729">
    <property type="term" value="F:toxin activity"/>
    <property type="evidence" value="ECO:0007669"/>
    <property type="project" value="UniProtKB-KW"/>
</dbReference>
<dbReference type="GO" id="GO:0009966">
    <property type="term" value="P:regulation of signal transduction"/>
    <property type="evidence" value="ECO:0007669"/>
    <property type="project" value="InterPro"/>
</dbReference>
<dbReference type="Gene3D" id="2.20.20.10">
    <property type="entry name" value="Anthopleurin-A"/>
    <property type="match status" value="1"/>
</dbReference>
<dbReference type="InterPro" id="IPR000693">
    <property type="entry name" value="Anenome_toxin"/>
</dbReference>
<dbReference type="InterPro" id="IPR023355">
    <property type="entry name" value="Myo_ane_neurotoxin_sf"/>
</dbReference>
<dbReference type="Pfam" id="PF00706">
    <property type="entry name" value="Toxin_4"/>
    <property type="match status" value="1"/>
</dbReference>
<dbReference type="PIRSF" id="PIRSF001905">
    <property type="entry name" value="Anenome_toxin"/>
    <property type="match status" value="1"/>
</dbReference>
<dbReference type="SUPFAM" id="SSF57392">
    <property type="entry name" value="Defensin-like"/>
    <property type="match status" value="1"/>
</dbReference>
<name>NA12_ANTFU</name>
<proteinExistence type="evidence at protein level"/>
<accession>P10454</accession>
<evidence type="ECO:0000269" key="1">
    <source>
    </source>
</evidence>
<evidence type="ECO:0000269" key="2">
    <source>
    </source>
</evidence>
<evidence type="ECO:0000303" key="3">
    <source>
    </source>
</evidence>
<evidence type="ECO:0000303" key="4">
    <source>
    </source>
</evidence>
<evidence type="ECO:0000303" key="5">
    <source>
    </source>
</evidence>
<evidence type="ECO:0000305" key="6"/>
<reference key="1">
    <citation type="journal article" date="1987" name="Toxicon">
        <title>Amino acid sequence of two sea anemone toxins from Anthopleura fuscoviridis.</title>
        <authorList>
            <person name="Sunahara S."/>
            <person name="Muramoto K."/>
            <person name="Tenma K."/>
            <person name="Kamiya H."/>
        </authorList>
    </citation>
    <scope>PROTEIN SEQUENCE</scope>
    <scope>DISULFIDE BONDS</scope>
    <source>
        <tissue>Nematoblast</tissue>
    </source>
</reference>
<reference key="2">
    <citation type="journal article" date="2004" name="J. Biol. Chem.">
        <title>Binding specificity of sea anemone toxins to Nav 1.1-1.6 sodium channels: unexpected contributions from differences in the IV/S3-S4 outer loop.</title>
        <authorList>
            <person name="Oliveira J.S."/>
            <person name="Redaelli E."/>
            <person name="Zaharenko A.J."/>
            <person name="Cassulini R.R."/>
            <person name="Konno K."/>
            <person name="Pimenta D.C."/>
            <person name="Freitas J.C."/>
            <person name="Clare J.J."/>
            <person name="Wanke E."/>
        </authorList>
    </citation>
    <scope>FUNCTION</scope>
    <scope>MASS SPECTROMETRY</scope>
    <scope>TOXIC DOSE</scope>
</reference>
<reference key="3">
    <citation type="journal article" date="2004" name="J. Biol. Chem.">
        <authorList>
            <person name="Oliveira J.S."/>
            <person name="Redaelli E."/>
            <person name="Zaharenko A.J."/>
            <person name="Cassulini R.R."/>
            <person name="Konno K."/>
            <person name="Pimenta D.C."/>
            <person name="Freitas J.C."/>
            <person name="Clare J.J."/>
            <person name="Wanke E."/>
        </authorList>
    </citation>
    <scope>ERRATUM OF PUBMED:15169781</scope>
</reference>
<reference key="4">
    <citation type="journal article" date="2012" name="Toxicon">
        <title>Development of a rational nomenclature for naming peptide and protein toxins from sea anemones.</title>
        <authorList>
            <person name="Oliveira J.S."/>
            <person name="Fuentes-Silva D."/>
            <person name="King G.F."/>
        </authorList>
    </citation>
    <scope>NOMENCLATURE</scope>
</reference>
<organism>
    <name type="scientific">Anthopleura fuscoviridis</name>
    <name type="common">Sea anemone</name>
    <dbReference type="NCBI Taxonomy" id="6111"/>
    <lineage>
        <taxon>Eukaryota</taxon>
        <taxon>Metazoa</taxon>
        <taxon>Cnidaria</taxon>
        <taxon>Anthozoa</taxon>
        <taxon>Hexacorallia</taxon>
        <taxon>Actiniaria</taxon>
        <taxon>Actiniidae</taxon>
        <taxon>Anthopleura</taxon>
    </lineage>
</organism>
<comment type="function">
    <text evidence="1">Binds specifically to voltage-gated sodium channels (Nav), thereby delaying their inactivation. This toxin has a great efficacy for Nav1.4/SCN4A (EC(50)=30.62 nM) and Nav1.5/SCN5A (EC(50)=62.5 nM). It is less potent on Nav1.6/SCN8A (EC(50)=about 300 nM), Nav1.1/SCN1A (EC(50)=390.55 nM), Nav1.3/SCN3A (EC(50)=459.36 nM) and Nav1.2/SCN2A (EC(50)=1998.00 nM) (when measured as the increase in the slow component).</text>
</comment>
<comment type="subcellular location">
    <subcellularLocation>
        <location>Secreted</location>
    </subcellularLocation>
    <subcellularLocation>
        <location>Nematocyst</location>
    </subcellularLocation>
</comment>
<comment type="mass spectrometry" mass="4941.0" method="MALDI" evidence="1"/>
<comment type="toxic dose">
    <text evidence="3">LD(50) is 450 ug/kg by intraperitoneal injection into mice.</text>
</comment>
<comment type="similarity">
    <text evidence="6">Belongs to the sea anemone sodium channel inhibitory toxin family. Type I subfamily.</text>
</comment>